<protein>
    <recommendedName>
        <fullName>F-box only protein 15</fullName>
    </recommendedName>
</protein>
<feature type="chain" id="PRO_0000119895" description="F-box only protein 15">
    <location>
        <begin position="1"/>
        <end position="433"/>
    </location>
</feature>
<feature type="domain" description="F-box" evidence="2">
    <location>
        <begin position="1"/>
        <end position="41"/>
    </location>
</feature>
<evidence type="ECO:0000250" key="1"/>
<evidence type="ECO:0000255" key="2">
    <source>
        <dbReference type="PROSITE-ProRule" id="PRU00080"/>
    </source>
</evidence>
<evidence type="ECO:0000269" key="3">
    <source>
    </source>
</evidence>
<evidence type="ECO:0000269" key="4">
    <source>
    </source>
</evidence>
<evidence type="ECO:0000305" key="5"/>
<reference key="1">
    <citation type="journal article" date="1999" name="Curr. Biol.">
        <title>A family of mammalian F-box proteins.</title>
        <authorList>
            <person name="Winston J.T."/>
            <person name="Koepp D.M."/>
            <person name="Zhu C."/>
            <person name="Elledge S.J."/>
            <person name="Harper J.W."/>
        </authorList>
    </citation>
    <scope>NUCLEOTIDE SEQUENCE [MRNA]</scope>
    <scope>TISSUE SPECIFICITY</scope>
    <scope>INTERACTION WITH SKP1</scope>
</reference>
<reference key="2">
    <citation type="journal article" date="2003" name="Mol. Cell. Biol.">
        <title>Fbx15 is a novel target of Oct3/4 but is dispensable for embryonic stem cell self-renewal and mouse development.</title>
        <authorList>
            <person name="Tokuzawa Y."/>
            <person name="Kaiho E."/>
            <person name="Maruyama M."/>
            <person name="Takahashi K."/>
            <person name="Mitsui K."/>
            <person name="Maeda M."/>
            <person name="Niwa H."/>
            <person name="Yamanaka S."/>
        </authorList>
    </citation>
    <scope>TISSUE SPECIFICITY</scope>
    <scope>DEVELOPMENTAL STAGE</scope>
</reference>
<sequence>MPSEILVKILSYLDAVTLVCIGCVSRRFYHLADDNLIWVRKYAAAFRSKRSRWKATSVEETATSLSLLSVWDKEDGYWKKEYITKQISSVRAALTNSLSPVKRRTSLPSKTKESLRISGLGWTIILREASGKEHIMQHSNLSVNDNSVTVFWHDKNWPHVDTLSTLDLYGATPIFMEQYKGPNTSCPRWLSLIEKYDLSNLRKSAMIGCDRHVRVFCVNPGLLVGLWQENGGLAFVMANIHSHGLFERSIMGSDTIPYTLPPDTTFVDNYPDSMTFYGDKGFQLHIDIHGSKTYFLCSTFHNLFCRRAGINNGYVKFLMINLKNNREHLPLVGKVGLEWRTDCLNGRIESCIVVDMTLLDEDKKPIWYVSSPVCLRSACLPDFPQPAYSFEYMDSVGGVCADLGWFENTDEYFIVRLDIYLSVAKLQQWFGRQ</sequence>
<comment type="function">
    <text evidence="1">Substrate-recognition component of the SCF (SKP1-CUL1-F-box protein)-type E3 ubiquitin ligase complex.</text>
</comment>
<comment type="subunit">
    <text evidence="1">Directly interacts with SKP1 and CUL1.</text>
</comment>
<comment type="tissue specificity">
    <text evidence="3 4">Expressed in testis.</text>
</comment>
<comment type="developmental stage">
    <text evidence="4">Expressed in undifferentiated embryonic stem cells, as well as early embryo from two-cell stage to blastocyst.</text>
</comment>
<comment type="sequence caution" evidence="5">
    <conflict type="erroneous initiation">
        <sequence resource="EMBL-CDS" id="AAF09139"/>
    </conflict>
</comment>
<organism>
    <name type="scientific">Mus musculus</name>
    <name type="common">Mouse</name>
    <dbReference type="NCBI Taxonomy" id="10090"/>
    <lineage>
        <taxon>Eukaryota</taxon>
        <taxon>Metazoa</taxon>
        <taxon>Chordata</taxon>
        <taxon>Craniata</taxon>
        <taxon>Vertebrata</taxon>
        <taxon>Euteleostomi</taxon>
        <taxon>Mammalia</taxon>
        <taxon>Eutheria</taxon>
        <taxon>Euarchontoglires</taxon>
        <taxon>Glires</taxon>
        <taxon>Rodentia</taxon>
        <taxon>Myomorpha</taxon>
        <taxon>Muroidea</taxon>
        <taxon>Muridae</taxon>
        <taxon>Murinae</taxon>
        <taxon>Mus</taxon>
        <taxon>Mus</taxon>
    </lineage>
</organism>
<keyword id="KW-1185">Reference proteome</keyword>
<keyword id="KW-0833">Ubl conjugation pathway</keyword>
<name>FBX15_MOUSE</name>
<gene>
    <name type="primary">Fbxo15</name>
    <name type="synonym">Fbx15</name>
</gene>
<proteinExistence type="evidence at protein level"/>
<dbReference type="EMBL" id="AF176530">
    <property type="protein sequence ID" value="AAF09139.1"/>
    <property type="status" value="ALT_INIT"/>
    <property type="molecule type" value="mRNA"/>
</dbReference>
<dbReference type="CCDS" id="CCDS37877.2"/>
<dbReference type="CORUM" id="Q9QZN0"/>
<dbReference type="FunCoup" id="Q9QZN0">
    <property type="interactions" value="34"/>
</dbReference>
<dbReference type="STRING" id="10090.ENSMUSP00000045925"/>
<dbReference type="iPTMnet" id="Q9QZN0"/>
<dbReference type="PhosphoSitePlus" id="Q9QZN0"/>
<dbReference type="PaxDb" id="10090-ENSMUSP00000045925"/>
<dbReference type="ProteomicsDB" id="271879"/>
<dbReference type="AGR" id="MGI:1354755"/>
<dbReference type="MGI" id="MGI:1354755">
    <property type="gene designation" value="Fbxo15"/>
</dbReference>
<dbReference type="eggNOG" id="ENOG502QPX2">
    <property type="taxonomic scope" value="Eukaryota"/>
</dbReference>
<dbReference type="InParanoid" id="Q9QZN0"/>
<dbReference type="Reactome" id="R-MMU-8951664">
    <property type="pathway name" value="Neddylation"/>
</dbReference>
<dbReference type="Reactome" id="R-MMU-983168">
    <property type="pathway name" value="Antigen processing: Ubiquitination &amp; Proteasome degradation"/>
</dbReference>
<dbReference type="ChiTaRS" id="Fbxo15">
    <property type="organism name" value="mouse"/>
</dbReference>
<dbReference type="PRO" id="PR:Q9QZN0"/>
<dbReference type="Proteomes" id="UP000000589">
    <property type="component" value="Unplaced"/>
</dbReference>
<dbReference type="RNAct" id="Q9QZN0">
    <property type="molecule type" value="protein"/>
</dbReference>
<dbReference type="GO" id="GO:0019005">
    <property type="term" value="C:SCF ubiquitin ligase complex"/>
    <property type="evidence" value="ECO:0000314"/>
    <property type="project" value="MGI"/>
</dbReference>
<dbReference type="CDD" id="cd22093">
    <property type="entry name" value="F-box_FBXO15"/>
    <property type="match status" value="1"/>
</dbReference>
<dbReference type="Gene3D" id="1.20.1280.50">
    <property type="match status" value="1"/>
</dbReference>
<dbReference type="InterPro" id="IPR036047">
    <property type="entry name" value="F-box-like_dom_sf"/>
</dbReference>
<dbReference type="InterPro" id="IPR001810">
    <property type="entry name" value="F-box_dom"/>
</dbReference>
<dbReference type="PANTHER" id="PTHR46731">
    <property type="entry name" value="F-BOX ONLY PROTEIN 15"/>
    <property type="match status" value="1"/>
</dbReference>
<dbReference type="PANTHER" id="PTHR46731:SF1">
    <property type="entry name" value="F-BOX ONLY PROTEIN 15"/>
    <property type="match status" value="1"/>
</dbReference>
<dbReference type="Pfam" id="PF12937">
    <property type="entry name" value="F-box-like"/>
    <property type="match status" value="1"/>
</dbReference>
<dbReference type="SMART" id="SM00256">
    <property type="entry name" value="FBOX"/>
    <property type="match status" value="1"/>
</dbReference>
<dbReference type="SUPFAM" id="SSF81383">
    <property type="entry name" value="F-box domain"/>
    <property type="match status" value="1"/>
</dbReference>
<dbReference type="PROSITE" id="PS50181">
    <property type="entry name" value="FBOX"/>
    <property type="match status" value="1"/>
</dbReference>
<accession>Q9QZN0</accession>